<keyword id="KW-0004">4Fe-4S</keyword>
<keyword id="KW-0067">ATP-binding</keyword>
<keyword id="KW-0963">Cytoplasm</keyword>
<keyword id="KW-0408">Iron</keyword>
<keyword id="KW-0411">Iron-sulfur</keyword>
<keyword id="KW-0460">Magnesium</keyword>
<keyword id="KW-0479">Metal-binding</keyword>
<keyword id="KW-0547">Nucleotide-binding</keyword>
<keyword id="KW-1185">Reference proteome</keyword>
<keyword id="KW-0694">RNA-binding</keyword>
<keyword id="KW-0808">Transferase</keyword>
<keyword id="KW-0819">tRNA processing</keyword>
<keyword id="KW-0820">tRNA-binding</keyword>
<dbReference type="EC" id="2.8.1.-" evidence="1"/>
<dbReference type="EMBL" id="CP000113">
    <property type="protein sequence ID" value="ABF88520.1"/>
    <property type="molecule type" value="Genomic_DNA"/>
</dbReference>
<dbReference type="RefSeq" id="WP_011555929.1">
    <property type="nucleotide sequence ID" value="NC_008095.1"/>
</dbReference>
<dbReference type="SMR" id="Q1CZQ8"/>
<dbReference type="STRING" id="246197.MXAN_5980"/>
<dbReference type="EnsemblBacteria" id="ABF88520">
    <property type="protein sequence ID" value="ABF88520"/>
    <property type="gene ID" value="MXAN_5980"/>
</dbReference>
<dbReference type="GeneID" id="41363219"/>
<dbReference type="KEGG" id="mxa:MXAN_5980"/>
<dbReference type="eggNOG" id="COG0037">
    <property type="taxonomic scope" value="Bacteria"/>
</dbReference>
<dbReference type="HOGENOM" id="CLU_026481_0_0_7"/>
<dbReference type="OrthoDB" id="9801054at2"/>
<dbReference type="Proteomes" id="UP000002402">
    <property type="component" value="Chromosome"/>
</dbReference>
<dbReference type="GO" id="GO:0005737">
    <property type="term" value="C:cytoplasm"/>
    <property type="evidence" value="ECO:0007669"/>
    <property type="project" value="UniProtKB-SubCell"/>
</dbReference>
<dbReference type="GO" id="GO:0051539">
    <property type="term" value="F:4 iron, 4 sulfur cluster binding"/>
    <property type="evidence" value="ECO:0007669"/>
    <property type="project" value="UniProtKB-KW"/>
</dbReference>
<dbReference type="GO" id="GO:0005524">
    <property type="term" value="F:ATP binding"/>
    <property type="evidence" value="ECO:0007669"/>
    <property type="project" value="UniProtKB-KW"/>
</dbReference>
<dbReference type="GO" id="GO:0046872">
    <property type="term" value="F:metal ion binding"/>
    <property type="evidence" value="ECO:0007669"/>
    <property type="project" value="UniProtKB-KW"/>
</dbReference>
<dbReference type="GO" id="GO:0016740">
    <property type="term" value="F:transferase activity"/>
    <property type="evidence" value="ECO:0007669"/>
    <property type="project" value="UniProtKB-KW"/>
</dbReference>
<dbReference type="GO" id="GO:0000049">
    <property type="term" value="F:tRNA binding"/>
    <property type="evidence" value="ECO:0007669"/>
    <property type="project" value="UniProtKB-KW"/>
</dbReference>
<dbReference type="GO" id="GO:0006400">
    <property type="term" value="P:tRNA modification"/>
    <property type="evidence" value="ECO:0007669"/>
    <property type="project" value="UniProtKB-ARBA"/>
</dbReference>
<dbReference type="CDD" id="cd24138">
    <property type="entry name" value="TtcA-like"/>
    <property type="match status" value="1"/>
</dbReference>
<dbReference type="Gene3D" id="3.40.50.620">
    <property type="entry name" value="HUPs"/>
    <property type="match status" value="1"/>
</dbReference>
<dbReference type="HAMAP" id="MF_01850">
    <property type="entry name" value="TtcA"/>
    <property type="match status" value="1"/>
</dbReference>
<dbReference type="InterPro" id="IPR014729">
    <property type="entry name" value="Rossmann-like_a/b/a_fold"/>
</dbReference>
<dbReference type="InterPro" id="IPR011063">
    <property type="entry name" value="TilS/TtcA_N"/>
</dbReference>
<dbReference type="InterPro" id="IPR012089">
    <property type="entry name" value="tRNA_Cyd_32_2_STrfase"/>
</dbReference>
<dbReference type="InterPro" id="IPR035107">
    <property type="entry name" value="tRNA_thiolation_TtcA_Ctu1"/>
</dbReference>
<dbReference type="NCBIfam" id="NF007972">
    <property type="entry name" value="PRK10696.1"/>
    <property type="match status" value="1"/>
</dbReference>
<dbReference type="PANTHER" id="PTHR43686:SF1">
    <property type="entry name" value="AMINOTRAN_5 DOMAIN-CONTAINING PROTEIN"/>
    <property type="match status" value="1"/>
</dbReference>
<dbReference type="PANTHER" id="PTHR43686">
    <property type="entry name" value="SULFURTRANSFERASE-RELATED"/>
    <property type="match status" value="1"/>
</dbReference>
<dbReference type="Pfam" id="PF01171">
    <property type="entry name" value="ATP_bind_3"/>
    <property type="match status" value="1"/>
</dbReference>
<dbReference type="PIRSF" id="PIRSF004976">
    <property type="entry name" value="ATPase_YdaO"/>
    <property type="match status" value="1"/>
</dbReference>
<dbReference type="SUPFAM" id="SSF52402">
    <property type="entry name" value="Adenine nucleotide alpha hydrolases-like"/>
    <property type="match status" value="1"/>
</dbReference>
<name>TTCA_MYXXD</name>
<organism>
    <name type="scientific">Myxococcus xanthus (strain DK1622)</name>
    <dbReference type="NCBI Taxonomy" id="246197"/>
    <lineage>
        <taxon>Bacteria</taxon>
        <taxon>Pseudomonadati</taxon>
        <taxon>Myxococcota</taxon>
        <taxon>Myxococcia</taxon>
        <taxon>Myxococcales</taxon>
        <taxon>Cystobacterineae</taxon>
        <taxon>Myxococcaceae</taxon>
        <taxon>Myxococcus</taxon>
    </lineage>
</organism>
<reference key="1">
    <citation type="journal article" date="2006" name="Proc. Natl. Acad. Sci. U.S.A.">
        <title>Evolution of sensory complexity recorded in a myxobacterial genome.</title>
        <authorList>
            <person name="Goldman B.S."/>
            <person name="Nierman W.C."/>
            <person name="Kaiser D."/>
            <person name="Slater S.C."/>
            <person name="Durkin A.S."/>
            <person name="Eisen J.A."/>
            <person name="Ronning C.M."/>
            <person name="Barbazuk W.B."/>
            <person name="Blanchard M."/>
            <person name="Field C."/>
            <person name="Halling C."/>
            <person name="Hinkle G."/>
            <person name="Iartchuk O."/>
            <person name="Kim H.S."/>
            <person name="Mackenzie C."/>
            <person name="Madupu R."/>
            <person name="Miller N."/>
            <person name="Shvartsbeyn A."/>
            <person name="Sullivan S.A."/>
            <person name="Vaudin M."/>
            <person name="Wiegand R."/>
            <person name="Kaplan H.B."/>
        </authorList>
    </citation>
    <scope>NUCLEOTIDE SEQUENCE [LARGE SCALE GENOMIC DNA]</scope>
    <source>
        <strain>DK1622</strain>
    </source>
</reference>
<proteinExistence type="inferred from homology"/>
<sequence length="284" mass="31823">MAAPMNDVQRLEKSLLGHMGRAIADHRLIEDGDRIMVGVSGGKDSYTMLHLLRELQRRAPVKFELLAVNLDQGHPGFPADKLEAYFQREGYPYKLLKEDTYSIVLEKTPPGKTQCSVCSRMRRGILYTAAVELGCTKIALGHHRDDLIHTLLLNLFFAGSIKAMPPLLRSDDGRNVVIRPLCYAPEKDIAKFAELMAFPIIPCDLCGTQENLQRKRMQRLMEELGKEIPNVRQSVLNAMANVRPSHLLDKTLNPDPLHASEEGATTTEPKDTQGSASPWLESRQ</sequence>
<comment type="function">
    <text evidence="1">Catalyzes the ATP-dependent 2-thiolation of cytidine in position 32 of tRNA, to form 2-thiocytidine (s(2)C32). The sulfur atoms are provided by the cysteine/cysteine desulfurase (IscS) system.</text>
</comment>
<comment type="catalytic activity">
    <reaction evidence="1">
        <text>cytidine(32) in tRNA + S-sulfanyl-L-cysteinyl-[cysteine desulfurase] + AH2 + ATP = 2-thiocytidine(32) in tRNA + L-cysteinyl-[cysteine desulfurase] + A + AMP + diphosphate + H(+)</text>
        <dbReference type="Rhea" id="RHEA:57048"/>
        <dbReference type="Rhea" id="RHEA-COMP:10288"/>
        <dbReference type="Rhea" id="RHEA-COMP:12157"/>
        <dbReference type="Rhea" id="RHEA-COMP:12158"/>
        <dbReference type="Rhea" id="RHEA-COMP:14821"/>
        <dbReference type="ChEBI" id="CHEBI:13193"/>
        <dbReference type="ChEBI" id="CHEBI:15378"/>
        <dbReference type="ChEBI" id="CHEBI:17499"/>
        <dbReference type="ChEBI" id="CHEBI:29950"/>
        <dbReference type="ChEBI" id="CHEBI:30616"/>
        <dbReference type="ChEBI" id="CHEBI:33019"/>
        <dbReference type="ChEBI" id="CHEBI:61963"/>
        <dbReference type="ChEBI" id="CHEBI:82748"/>
        <dbReference type="ChEBI" id="CHEBI:141453"/>
        <dbReference type="ChEBI" id="CHEBI:456215"/>
    </reaction>
    <physiologicalReaction direction="left-to-right" evidence="1">
        <dbReference type="Rhea" id="RHEA:57049"/>
    </physiologicalReaction>
</comment>
<comment type="cofactor">
    <cofactor evidence="1">
        <name>Mg(2+)</name>
        <dbReference type="ChEBI" id="CHEBI:18420"/>
    </cofactor>
</comment>
<comment type="cofactor">
    <cofactor evidence="1">
        <name>[4Fe-4S] cluster</name>
        <dbReference type="ChEBI" id="CHEBI:49883"/>
    </cofactor>
    <text evidence="1">Binds 1 [4Fe-4S] cluster per subunit. The cluster is chelated by three Cys residues, the fourth Fe has a free coordination site that may bind a sulfur atom transferred from the persulfide of IscS.</text>
</comment>
<comment type="pathway">
    <text evidence="1">tRNA modification.</text>
</comment>
<comment type="subunit">
    <text evidence="1">Homodimer.</text>
</comment>
<comment type="subcellular location">
    <subcellularLocation>
        <location evidence="1">Cytoplasm</location>
    </subcellularLocation>
</comment>
<comment type="miscellaneous">
    <text evidence="1">The thiolation reaction likely consists of two steps: a first activation step by ATP to form an adenylated intermediate of the target base of tRNA, and a second nucleophilic substitution step of the sulfur (S) atom supplied by the hydrosulfide attached to the Fe-S cluster.</text>
</comment>
<comment type="similarity">
    <text evidence="1">Belongs to the TtcA family.</text>
</comment>
<evidence type="ECO:0000255" key="1">
    <source>
        <dbReference type="HAMAP-Rule" id="MF_01850"/>
    </source>
</evidence>
<evidence type="ECO:0000256" key="2">
    <source>
        <dbReference type="SAM" id="MobiDB-lite"/>
    </source>
</evidence>
<feature type="chain" id="PRO_0000348770" description="tRNA-cytidine(32) 2-sulfurtransferase">
    <location>
        <begin position="1"/>
        <end position="284"/>
    </location>
</feature>
<feature type="region of interest" description="Disordered" evidence="2">
    <location>
        <begin position="247"/>
        <end position="284"/>
    </location>
</feature>
<feature type="short sequence motif" description="PP-loop motif" evidence="1">
    <location>
        <begin position="40"/>
        <end position="45"/>
    </location>
</feature>
<feature type="compositionally biased region" description="Polar residues" evidence="2">
    <location>
        <begin position="263"/>
        <end position="276"/>
    </location>
</feature>
<feature type="binding site" evidence="1">
    <location>
        <position position="115"/>
    </location>
    <ligand>
        <name>[4Fe-4S] cluster</name>
        <dbReference type="ChEBI" id="CHEBI:49883"/>
    </ligand>
</feature>
<feature type="binding site" evidence="1">
    <location>
        <position position="118"/>
    </location>
    <ligand>
        <name>[4Fe-4S] cluster</name>
        <dbReference type="ChEBI" id="CHEBI:49883"/>
    </ligand>
</feature>
<feature type="binding site" evidence="1">
    <location>
        <position position="206"/>
    </location>
    <ligand>
        <name>[4Fe-4S] cluster</name>
        <dbReference type="ChEBI" id="CHEBI:49883"/>
    </ligand>
</feature>
<gene>
    <name evidence="1" type="primary">ttcA</name>
    <name type="ordered locus">MXAN_5980</name>
</gene>
<protein>
    <recommendedName>
        <fullName evidence="1">tRNA-cytidine(32) 2-sulfurtransferase</fullName>
        <ecNumber evidence="1">2.8.1.-</ecNumber>
    </recommendedName>
    <alternativeName>
        <fullName evidence="1">Two-thiocytidine biosynthesis protein A</fullName>
    </alternativeName>
    <alternativeName>
        <fullName evidence="1">tRNA 2-thiocytidine biosynthesis protein TtcA</fullName>
    </alternativeName>
</protein>
<accession>Q1CZQ8</accession>